<sequence length="422" mass="45588">MFLKVQKSDISGSISIPGSKSHTIRSLFLAGLAKGTSVIRNPLLSTDAVSGVNVCRAFGSTYDLNNESYVVNGMGACPQVPENVIDVGNSGTSLRLGLMTAALVDGYTVFTGDYQIRKRQIGPLVEAINNLGGKAFTTRGNESAPVVIKGRATGGYTKLDCVTSQYLSSILLNTPLLEKDTHVEITRLNEIPYVEITLWWLDKLGIKYSHNSMKEFFIPGGQQYRPFECTIPGDFSSATFFMVQAAISERELVLTNLDMSDPQGDKAVLDILADMGAEIKYDHNNIKIKGKSLKGREIDMNSIPDALPAMAVAACFAKGETRLVNVPQARLKETDRISVMCSELTKMGADISELPDGLVIRESKLHGAAVKGYDDHRIVMSLAIAGLNCSGETVIDTAEAMNVTYPGFVESVKSCGGKIELI</sequence>
<name>AROA_RUMCH</name>
<evidence type="ECO:0000255" key="1">
    <source>
        <dbReference type="HAMAP-Rule" id="MF_00210"/>
    </source>
</evidence>
<feature type="chain" id="PRO_1000124679" description="3-phosphoshikimate 1-carboxyvinyltransferase">
    <location>
        <begin position="1"/>
        <end position="422"/>
    </location>
</feature>
<feature type="active site" description="Proton acceptor" evidence="1">
    <location>
        <position position="305"/>
    </location>
</feature>
<feature type="binding site" evidence="1">
    <location>
        <position position="20"/>
    </location>
    <ligand>
        <name>3-phosphoshikimate</name>
        <dbReference type="ChEBI" id="CHEBI:145989"/>
    </ligand>
</feature>
<feature type="binding site" evidence="1">
    <location>
        <position position="20"/>
    </location>
    <ligand>
        <name>phosphoenolpyruvate</name>
        <dbReference type="ChEBI" id="CHEBI:58702"/>
    </ligand>
</feature>
<feature type="binding site" evidence="1">
    <location>
        <position position="21"/>
    </location>
    <ligand>
        <name>3-phosphoshikimate</name>
        <dbReference type="ChEBI" id="CHEBI:145989"/>
    </ligand>
</feature>
<feature type="binding site" evidence="1">
    <location>
        <position position="25"/>
    </location>
    <ligand>
        <name>3-phosphoshikimate</name>
        <dbReference type="ChEBI" id="CHEBI:145989"/>
    </ligand>
</feature>
<feature type="binding site" evidence="1">
    <location>
        <position position="91"/>
    </location>
    <ligand>
        <name>phosphoenolpyruvate</name>
        <dbReference type="ChEBI" id="CHEBI:58702"/>
    </ligand>
</feature>
<feature type="binding site" evidence="1">
    <location>
        <position position="119"/>
    </location>
    <ligand>
        <name>phosphoenolpyruvate</name>
        <dbReference type="ChEBI" id="CHEBI:58702"/>
    </ligand>
</feature>
<feature type="binding site" evidence="1">
    <location>
        <position position="163"/>
    </location>
    <ligand>
        <name>3-phosphoshikimate</name>
        <dbReference type="ChEBI" id="CHEBI:145989"/>
    </ligand>
</feature>
<feature type="binding site" evidence="1">
    <location>
        <position position="164"/>
    </location>
    <ligand>
        <name>3-phosphoshikimate</name>
        <dbReference type="ChEBI" id="CHEBI:145989"/>
    </ligand>
</feature>
<feature type="binding site" evidence="1">
    <location>
        <position position="165"/>
    </location>
    <ligand>
        <name>3-phosphoshikimate</name>
        <dbReference type="ChEBI" id="CHEBI:145989"/>
    </ligand>
</feature>
<feature type="binding site" evidence="1">
    <location>
        <position position="165"/>
    </location>
    <ligand>
        <name>phosphoenolpyruvate</name>
        <dbReference type="ChEBI" id="CHEBI:58702"/>
    </ligand>
</feature>
<feature type="binding site" evidence="1">
    <location>
        <position position="305"/>
    </location>
    <ligand>
        <name>3-phosphoshikimate</name>
        <dbReference type="ChEBI" id="CHEBI:145989"/>
    </ligand>
</feature>
<feature type="binding site" evidence="1">
    <location>
        <position position="328"/>
    </location>
    <ligand>
        <name>3-phosphoshikimate</name>
        <dbReference type="ChEBI" id="CHEBI:145989"/>
    </ligand>
</feature>
<feature type="binding site" evidence="1">
    <location>
        <position position="332"/>
    </location>
    <ligand>
        <name>3-phosphoshikimate</name>
        <dbReference type="ChEBI" id="CHEBI:145989"/>
    </ligand>
</feature>
<feature type="binding site" evidence="1">
    <location>
        <position position="336"/>
    </location>
    <ligand>
        <name>phosphoenolpyruvate</name>
        <dbReference type="ChEBI" id="CHEBI:58702"/>
    </ligand>
</feature>
<feature type="binding site" evidence="1">
    <location>
        <position position="377"/>
    </location>
    <ligand>
        <name>phosphoenolpyruvate</name>
        <dbReference type="ChEBI" id="CHEBI:58702"/>
    </ligand>
</feature>
<gene>
    <name evidence="1" type="primary">aroA</name>
    <name type="ordered locus">Ccel_2428</name>
</gene>
<comment type="function">
    <text evidence="1">Catalyzes the transfer of the enolpyruvyl moiety of phosphoenolpyruvate (PEP) to the 5-hydroxyl of shikimate-3-phosphate (S3P) to produce enolpyruvyl shikimate-3-phosphate and inorganic phosphate.</text>
</comment>
<comment type="catalytic activity">
    <reaction evidence="1">
        <text>3-phosphoshikimate + phosphoenolpyruvate = 5-O-(1-carboxyvinyl)-3-phosphoshikimate + phosphate</text>
        <dbReference type="Rhea" id="RHEA:21256"/>
        <dbReference type="ChEBI" id="CHEBI:43474"/>
        <dbReference type="ChEBI" id="CHEBI:57701"/>
        <dbReference type="ChEBI" id="CHEBI:58702"/>
        <dbReference type="ChEBI" id="CHEBI:145989"/>
        <dbReference type="EC" id="2.5.1.19"/>
    </reaction>
    <physiologicalReaction direction="left-to-right" evidence="1">
        <dbReference type="Rhea" id="RHEA:21257"/>
    </physiologicalReaction>
</comment>
<comment type="pathway">
    <text evidence="1">Metabolic intermediate biosynthesis; chorismate biosynthesis; chorismate from D-erythrose 4-phosphate and phosphoenolpyruvate: step 6/7.</text>
</comment>
<comment type="subunit">
    <text evidence="1">Monomer.</text>
</comment>
<comment type="subcellular location">
    <subcellularLocation>
        <location evidence="1">Cytoplasm</location>
    </subcellularLocation>
</comment>
<comment type="similarity">
    <text evidence="1">Belongs to the EPSP synthase family.</text>
</comment>
<protein>
    <recommendedName>
        <fullName evidence="1">3-phosphoshikimate 1-carboxyvinyltransferase</fullName>
        <ecNumber evidence="1">2.5.1.19</ecNumber>
    </recommendedName>
    <alternativeName>
        <fullName evidence="1">5-enolpyruvylshikimate-3-phosphate synthase</fullName>
        <shortName evidence="1">EPSP synthase</shortName>
        <shortName evidence="1">EPSPS</shortName>
    </alternativeName>
</protein>
<keyword id="KW-0028">Amino-acid biosynthesis</keyword>
<keyword id="KW-0057">Aromatic amino acid biosynthesis</keyword>
<keyword id="KW-0963">Cytoplasm</keyword>
<keyword id="KW-1185">Reference proteome</keyword>
<keyword id="KW-0808">Transferase</keyword>
<reference key="1">
    <citation type="submission" date="2009-01" db="EMBL/GenBank/DDBJ databases">
        <title>Complete sequence of Clostridium cellulolyticum H10.</title>
        <authorList>
            <consortium name="US DOE Joint Genome Institute"/>
            <person name="Lucas S."/>
            <person name="Copeland A."/>
            <person name="Lapidus A."/>
            <person name="Glavina del Rio T."/>
            <person name="Dalin E."/>
            <person name="Tice H."/>
            <person name="Bruce D."/>
            <person name="Goodwin L."/>
            <person name="Pitluck S."/>
            <person name="Chertkov O."/>
            <person name="Saunders E."/>
            <person name="Brettin T."/>
            <person name="Detter J.C."/>
            <person name="Han C."/>
            <person name="Larimer F."/>
            <person name="Land M."/>
            <person name="Hauser L."/>
            <person name="Kyrpides N."/>
            <person name="Ivanova N."/>
            <person name="Zhou J."/>
            <person name="Richardson P."/>
        </authorList>
    </citation>
    <scope>NUCLEOTIDE SEQUENCE [LARGE SCALE GENOMIC DNA]</scope>
    <source>
        <strain>ATCC 35319 / DSM 5812 / JCM 6584 / H10</strain>
    </source>
</reference>
<proteinExistence type="inferred from homology"/>
<organism>
    <name type="scientific">Ruminiclostridium cellulolyticum (strain ATCC 35319 / DSM 5812 / JCM 6584 / H10)</name>
    <name type="common">Clostridium cellulolyticum</name>
    <dbReference type="NCBI Taxonomy" id="394503"/>
    <lineage>
        <taxon>Bacteria</taxon>
        <taxon>Bacillati</taxon>
        <taxon>Bacillota</taxon>
        <taxon>Clostridia</taxon>
        <taxon>Eubacteriales</taxon>
        <taxon>Oscillospiraceae</taxon>
        <taxon>Ruminiclostridium</taxon>
    </lineage>
</organism>
<accession>B8I5M2</accession>
<dbReference type="EC" id="2.5.1.19" evidence="1"/>
<dbReference type="EMBL" id="CP001348">
    <property type="protein sequence ID" value="ACL76758.1"/>
    <property type="molecule type" value="Genomic_DNA"/>
</dbReference>
<dbReference type="RefSeq" id="WP_015925847.1">
    <property type="nucleotide sequence ID" value="NC_011898.1"/>
</dbReference>
<dbReference type="SMR" id="B8I5M2"/>
<dbReference type="STRING" id="394503.Ccel_2428"/>
<dbReference type="KEGG" id="cce:Ccel_2428"/>
<dbReference type="eggNOG" id="COG0128">
    <property type="taxonomic scope" value="Bacteria"/>
</dbReference>
<dbReference type="HOGENOM" id="CLU_024321_0_0_9"/>
<dbReference type="OrthoDB" id="9809920at2"/>
<dbReference type="UniPathway" id="UPA00053">
    <property type="reaction ID" value="UER00089"/>
</dbReference>
<dbReference type="Proteomes" id="UP000001349">
    <property type="component" value="Chromosome"/>
</dbReference>
<dbReference type="GO" id="GO:0005737">
    <property type="term" value="C:cytoplasm"/>
    <property type="evidence" value="ECO:0007669"/>
    <property type="project" value="UniProtKB-SubCell"/>
</dbReference>
<dbReference type="GO" id="GO:0003866">
    <property type="term" value="F:3-phosphoshikimate 1-carboxyvinyltransferase activity"/>
    <property type="evidence" value="ECO:0007669"/>
    <property type="project" value="UniProtKB-UniRule"/>
</dbReference>
<dbReference type="GO" id="GO:0008652">
    <property type="term" value="P:amino acid biosynthetic process"/>
    <property type="evidence" value="ECO:0007669"/>
    <property type="project" value="UniProtKB-KW"/>
</dbReference>
<dbReference type="GO" id="GO:0009073">
    <property type="term" value="P:aromatic amino acid family biosynthetic process"/>
    <property type="evidence" value="ECO:0007669"/>
    <property type="project" value="UniProtKB-KW"/>
</dbReference>
<dbReference type="GO" id="GO:0009423">
    <property type="term" value="P:chorismate biosynthetic process"/>
    <property type="evidence" value="ECO:0007669"/>
    <property type="project" value="UniProtKB-UniRule"/>
</dbReference>
<dbReference type="CDD" id="cd01556">
    <property type="entry name" value="EPSP_synthase"/>
    <property type="match status" value="1"/>
</dbReference>
<dbReference type="Gene3D" id="3.65.10.10">
    <property type="entry name" value="Enolpyruvate transferase domain"/>
    <property type="match status" value="2"/>
</dbReference>
<dbReference type="HAMAP" id="MF_00210">
    <property type="entry name" value="EPSP_synth"/>
    <property type="match status" value="1"/>
</dbReference>
<dbReference type="InterPro" id="IPR001986">
    <property type="entry name" value="Enolpyruvate_Tfrase_dom"/>
</dbReference>
<dbReference type="InterPro" id="IPR036968">
    <property type="entry name" value="Enolpyruvate_Tfrase_sf"/>
</dbReference>
<dbReference type="InterPro" id="IPR006264">
    <property type="entry name" value="EPSP_synthase"/>
</dbReference>
<dbReference type="InterPro" id="IPR023193">
    <property type="entry name" value="EPSP_synthase_CS"/>
</dbReference>
<dbReference type="InterPro" id="IPR013792">
    <property type="entry name" value="RNA3'P_cycl/enolpyr_Trfase_a/b"/>
</dbReference>
<dbReference type="NCBIfam" id="TIGR01356">
    <property type="entry name" value="aroA"/>
    <property type="match status" value="1"/>
</dbReference>
<dbReference type="PANTHER" id="PTHR21090">
    <property type="entry name" value="AROM/DEHYDROQUINATE SYNTHASE"/>
    <property type="match status" value="1"/>
</dbReference>
<dbReference type="PANTHER" id="PTHR21090:SF5">
    <property type="entry name" value="PENTAFUNCTIONAL AROM POLYPEPTIDE"/>
    <property type="match status" value="1"/>
</dbReference>
<dbReference type="Pfam" id="PF00275">
    <property type="entry name" value="EPSP_synthase"/>
    <property type="match status" value="1"/>
</dbReference>
<dbReference type="PIRSF" id="PIRSF000505">
    <property type="entry name" value="EPSPS"/>
    <property type="match status" value="1"/>
</dbReference>
<dbReference type="SUPFAM" id="SSF55205">
    <property type="entry name" value="EPT/RTPC-like"/>
    <property type="match status" value="1"/>
</dbReference>
<dbReference type="PROSITE" id="PS00885">
    <property type="entry name" value="EPSP_SYNTHASE_2"/>
    <property type="match status" value="1"/>
</dbReference>